<gene>
    <name evidence="1" type="primary">rsmH</name>
    <name type="synonym">mraW</name>
    <name type="ordered locus">APJL_0011</name>
</gene>
<feature type="chain" id="PRO_0000386694" description="Ribosomal RNA small subunit methyltransferase H">
    <location>
        <begin position="1"/>
        <end position="313"/>
    </location>
</feature>
<feature type="binding site" evidence="1">
    <location>
        <begin position="36"/>
        <end position="38"/>
    </location>
    <ligand>
        <name>S-adenosyl-L-methionine</name>
        <dbReference type="ChEBI" id="CHEBI:59789"/>
    </ligand>
</feature>
<feature type="binding site" evidence="1">
    <location>
        <position position="56"/>
    </location>
    <ligand>
        <name>S-adenosyl-L-methionine</name>
        <dbReference type="ChEBI" id="CHEBI:59789"/>
    </ligand>
</feature>
<feature type="binding site" evidence="1">
    <location>
        <position position="80"/>
    </location>
    <ligand>
        <name>S-adenosyl-L-methionine</name>
        <dbReference type="ChEBI" id="CHEBI:59789"/>
    </ligand>
</feature>
<feature type="binding site" evidence="1">
    <location>
        <position position="102"/>
    </location>
    <ligand>
        <name>S-adenosyl-L-methionine</name>
        <dbReference type="ChEBI" id="CHEBI:59789"/>
    </ligand>
</feature>
<feature type="binding site" evidence="1">
    <location>
        <position position="109"/>
    </location>
    <ligand>
        <name>S-adenosyl-L-methionine</name>
        <dbReference type="ChEBI" id="CHEBI:59789"/>
    </ligand>
</feature>
<keyword id="KW-0963">Cytoplasm</keyword>
<keyword id="KW-0489">Methyltransferase</keyword>
<keyword id="KW-0698">rRNA processing</keyword>
<keyword id="KW-0949">S-adenosyl-L-methionine</keyword>
<keyword id="KW-0808">Transferase</keyword>
<evidence type="ECO:0000255" key="1">
    <source>
        <dbReference type="HAMAP-Rule" id="MF_01007"/>
    </source>
</evidence>
<comment type="function">
    <text evidence="1">Specifically methylates the N4 position of cytidine in position 1402 (C1402) of 16S rRNA.</text>
</comment>
<comment type="catalytic activity">
    <reaction evidence="1">
        <text>cytidine(1402) in 16S rRNA + S-adenosyl-L-methionine = N(4)-methylcytidine(1402) in 16S rRNA + S-adenosyl-L-homocysteine + H(+)</text>
        <dbReference type="Rhea" id="RHEA:42928"/>
        <dbReference type="Rhea" id="RHEA-COMP:10286"/>
        <dbReference type="Rhea" id="RHEA-COMP:10287"/>
        <dbReference type="ChEBI" id="CHEBI:15378"/>
        <dbReference type="ChEBI" id="CHEBI:57856"/>
        <dbReference type="ChEBI" id="CHEBI:59789"/>
        <dbReference type="ChEBI" id="CHEBI:74506"/>
        <dbReference type="ChEBI" id="CHEBI:82748"/>
        <dbReference type="EC" id="2.1.1.199"/>
    </reaction>
</comment>
<comment type="subcellular location">
    <subcellularLocation>
        <location evidence="1">Cytoplasm</location>
    </subcellularLocation>
</comment>
<comment type="similarity">
    <text evidence="1">Belongs to the methyltransferase superfamily. RsmH family.</text>
</comment>
<sequence length="313" mass="34573">MNDTVHKHITVLLHEAVDGLAIKPNGIYIDGTFGRGGHSRLILSKLSEQGRLIATDRDPRAIAEANTIDDTRFQIVHTAFSAIPDVCEQLGLTGKIDGILLDLGVSSPQLDDAERGFSFMRDGPLDMRMDTTKGLSAAEWLAQVSADDLAWVLKTFGEERFAKRIAQAVVSYNKSVTDKISRTLQLAQIIADAVPFKDKHKHPATRSFQAIRIFINSELDELEKALQSALSVLAPEGRLSIISFHSLEDRMVKQFMKKNSKGMDVPKGLPILESELNKNIPLKIIGKAIMPSEAEIEANPRSRSAVLRIAEKR</sequence>
<protein>
    <recommendedName>
        <fullName evidence="1">Ribosomal RNA small subunit methyltransferase H</fullName>
        <ecNumber evidence="1">2.1.1.199</ecNumber>
    </recommendedName>
    <alternativeName>
        <fullName evidence="1">16S rRNA m(4)C1402 methyltransferase</fullName>
    </alternativeName>
    <alternativeName>
        <fullName evidence="1">rRNA (cytosine-N(4)-)-methyltransferase RsmH</fullName>
    </alternativeName>
</protein>
<organism>
    <name type="scientific">Actinobacillus pleuropneumoniae serotype 3 (strain JL03)</name>
    <dbReference type="NCBI Taxonomy" id="434271"/>
    <lineage>
        <taxon>Bacteria</taxon>
        <taxon>Pseudomonadati</taxon>
        <taxon>Pseudomonadota</taxon>
        <taxon>Gammaproteobacteria</taxon>
        <taxon>Pasteurellales</taxon>
        <taxon>Pasteurellaceae</taxon>
        <taxon>Actinobacillus</taxon>
    </lineage>
</organism>
<accession>B0BRG9</accession>
<dbReference type="EC" id="2.1.1.199" evidence="1"/>
<dbReference type="EMBL" id="CP000687">
    <property type="protein sequence ID" value="ABY68617.1"/>
    <property type="molecule type" value="Genomic_DNA"/>
</dbReference>
<dbReference type="RefSeq" id="WP_012262662.1">
    <property type="nucleotide sequence ID" value="NC_010278.1"/>
</dbReference>
<dbReference type="SMR" id="B0BRG9"/>
<dbReference type="KEGG" id="apj:APJL_0011"/>
<dbReference type="HOGENOM" id="CLU_038422_2_0_6"/>
<dbReference type="Proteomes" id="UP000008547">
    <property type="component" value="Chromosome"/>
</dbReference>
<dbReference type="GO" id="GO:0005737">
    <property type="term" value="C:cytoplasm"/>
    <property type="evidence" value="ECO:0007669"/>
    <property type="project" value="UniProtKB-SubCell"/>
</dbReference>
<dbReference type="GO" id="GO:0071424">
    <property type="term" value="F:rRNA (cytosine-N4-)-methyltransferase activity"/>
    <property type="evidence" value="ECO:0007669"/>
    <property type="project" value="UniProtKB-UniRule"/>
</dbReference>
<dbReference type="GO" id="GO:0070475">
    <property type="term" value="P:rRNA base methylation"/>
    <property type="evidence" value="ECO:0007669"/>
    <property type="project" value="UniProtKB-UniRule"/>
</dbReference>
<dbReference type="FunFam" id="1.10.150.170:FF:000001">
    <property type="entry name" value="Ribosomal RNA small subunit methyltransferase H"/>
    <property type="match status" value="1"/>
</dbReference>
<dbReference type="Gene3D" id="1.10.150.170">
    <property type="entry name" value="Putative methyltransferase TM0872, insert domain"/>
    <property type="match status" value="1"/>
</dbReference>
<dbReference type="Gene3D" id="3.40.50.150">
    <property type="entry name" value="Vaccinia Virus protein VP39"/>
    <property type="match status" value="1"/>
</dbReference>
<dbReference type="HAMAP" id="MF_01007">
    <property type="entry name" value="16SrRNA_methyltr_H"/>
    <property type="match status" value="1"/>
</dbReference>
<dbReference type="InterPro" id="IPR002903">
    <property type="entry name" value="RsmH"/>
</dbReference>
<dbReference type="InterPro" id="IPR023397">
    <property type="entry name" value="SAM-dep_MeTrfase_MraW_recog"/>
</dbReference>
<dbReference type="InterPro" id="IPR029063">
    <property type="entry name" value="SAM-dependent_MTases_sf"/>
</dbReference>
<dbReference type="NCBIfam" id="TIGR00006">
    <property type="entry name" value="16S rRNA (cytosine(1402)-N(4))-methyltransferase RsmH"/>
    <property type="match status" value="1"/>
</dbReference>
<dbReference type="PANTHER" id="PTHR11265:SF0">
    <property type="entry name" value="12S RRNA N4-METHYLCYTIDINE METHYLTRANSFERASE"/>
    <property type="match status" value="1"/>
</dbReference>
<dbReference type="PANTHER" id="PTHR11265">
    <property type="entry name" value="S-ADENOSYL-METHYLTRANSFERASE MRAW"/>
    <property type="match status" value="1"/>
</dbReference>
<dbReference type="Pfam" id="PF01795">
    <property type="entry name" value="Methyltransf_5"/>
    <property type="match status" value="1"/>
</dbReference>
<dbReference type="PIRSF" id="PIRSF004486">
    <property type="entry name" value="MraW"/>
    <property type="match status" value="1"/>
</dbReference>
<dbReference type="SUPFAM" id="SSF81799">
    <property type="entry name" value="Putative methyltransferase TM0872, insert domain"/>
    <property type="match status" value="1"/>
</dbReference>
<dbReference type="SUPFAM" id="SSF53335">
    <property type="entry name" value="S-adenosyl-L-methionine-dependent methyltransferases"/>
    <property type="match status" value="1"/>
</dbReference>
<reference key="1">
    <citation type="journal article" date="2008" name="PLoS ONE">
        <title>Genome biology of Actinobacillus pleuropneumoniae JL03, an isolate of serotype 3 prevalent in China.</title>
        <authorList>
            <person name="Xu Z."/>
            <person name="Zhou Y."/>
            <person name="Li L."/>
            <person name="Zhou R."/>
            <person name="Xiao S."/>
            <person name="Wan Y."/>
            <person name="Zhang S."/>
            <person name="Wang K."/>
            <person name="Li W."/>
            <person name="Li L."/>
            <person name="Jin H."/>
            <person name="Kang M."/>
            <person name="Dalai B."/>
            <person name="Li T."/>
            <person name="Liu L."/>
            <person name="Cheng Y."/>
            <person name="Zhang L."/>
            <person name="Xu T."/>
            <person name="Zheng H."/>
            <person name="Pu S."/>
            <person name="Wang B."/>
            <person name="Gu W."/>
            <person name="Zhang X.L."/>
            <person name="Zhu G.-F."/>
            <person name="Wang S."/>
            <person name="Zhao G.-P."/>
            <person name="Chen H."/>
        </authorList>
    </citation>
    <scope>NUCLEOTIDE SEQUENCE [LARGE SCALE GENOMIC DNA]</scope>
    <source>
        <strain>JL03</strain>
    </source>
</reference>
<name>RSMH_ACTPJ</name>
<proteinExistence type="inferred from homology"/>